<protein>
    <recommendedName>
        <fullName evidence="1">Acetyl-coenzyme A carboxylase carboxyl transferase subunit alpha</fullName>
        <shortName evidence="1">ACCase subunit alpha</shortName>
        <shortName evidence="1">Acetyl-CoA carboxylase carboxyltransferase subunit alpha</shortName>
        <ecNumber evidence="1">2.1.3.15</ecNumber>
    </recommendedName>
</protein>
<comment type="function">
    <text evidence="1">Component of the acetyl coenzyme A carboxylase (ACC) complex. First, biotin carboxylase catalyzes the carboxylation of biotin on its carrier protein (BCCP) and then the CO(2) group is transferred by the carboxyltransferase to acetyl-CoA to form malonyl-CoA.</text>
</comment>
<comment type="catalytic activity">
    <reaction evidence="1">
        <text>N(6)-carboxybiotinyl-L-lysyl-[protein] + acetyl-CoA = N(6)-biotinyl-L-lysyl-[protein] + malonyl-CoA</text>
        <dbReference type="Rhea" id="RHEA:54728"/>
        <dbReference type="Rhea" id="RHEA-COMP:10505"/>
        <dbReference type="Rhea" id="RHEA-COMP:10506"/>
        <dbReference type="ChEBI" id="CHEBI:57288"/>
        <dbReference type="ChEBI" id="CHEBI:57384"/>
        <dbReference type="ChEBI" id="CHEBI:83144"/>
        <dbReference type="ChEBI" id="CHEBI:83145"/>
        <dbReference type="EC" id="2.1.3.15"/>
    </reaction>
</comment>
<comment type="pathway">
    <text evidence="1">Lipid metabolism; malonyl-CoA biosynthesis; malonyl-CoA from acetyl-CoA: step 1/1.</text>
</comment>
<comment type="subunit">
    <text evidence="1">Acetyl-CoA carboxylase is a heterohexamer composed of biotin carboxyl carrier protein (AccB), biotin carboxylase (AccC) and two subunits each of ACCase subunit alpha (AccA) and ACCase subunit beta (AccD).</text>
</comment>
<comment type="subcellular location">
    <subcellularLocation>
        <location evidence="1">Cytoplasm</location>
    </subcellularLocation>
</comment>
<comment type="similarity">
    <text evidence="1">Belongs to the AccA family.</text>
</comment>
<gene>
    <name evidence="1" type="primary">accA</name>
    <name type="ordered locus">Dhaf_2414</name>
</gene>
<keyword id="KW-0067">ATP-binding</keyword>
<keyword id="KW-0963">Cytoplasm</keyword>
<keyword id="KW-0275">Fatty acid biosynthesis</keyword>
<keyword id="KW-0276">Fatty acid metabolism</keyword>
<keyword id="KW-0444">Lipid biosynthesis</keyword>
<keyword id="KW-0443">Lipid metabolism</keyword>
<keyword id="KW-0547">Nucleotide-binding</keyword>
<keyword id="KW-0808">Transferase</keyword>
<name>ACCA_DESHD</name>
<proteinExistence type="inferred from homology"/>
<organism>
    <name type="scientific">Desulfitobacterium hafniense (strain DSM 10664 / DCB-2)</name>
    <dbReference type="NCBI Taxonomy" id="272564"/>
    <lineage>
        <taxon>Bacteria</taxon>
        <taxon>Bacillati</taxon>
        <taxon>Bacillota</taxon>
        <taxon>Clostridia</taxon>
        <taxon>Eubacteriales</taxon>
        <taxon>Desulfitobacteriaceae</taxon>
        <taxon>Desulfitobacterium</taxon>
    </lineage>
</organism>
<accession>B8FTK8</accession>
<reference key="1">
    <citation type="journal article" date="2012" name="BMC Microbiol.">
        <title>Genome sequence of Desulfitobacterium hafniense DCB-2, a Gram-positive anaerobe capable of dehalogenation and metal reduction.</title>
        <authorList>
            <person name="Kim S.H."/>
            <person name="Harzman C."/>
            <person name="Davis J.K."/>
            <person name="Hutcheson R."/>
            <person name="Broderick J.B."/>
            <person name="Marsh T.L."/>
            <person name="Tiedje J.M."/>
        </authorList>
    </citation>
    <scope>NUCLEOTIDE SEQUENCE [LARGE SCALE GENOMIC DNA]</scope>
    <source>
        <strain>DSM 10664 / DCB-2</strain>
    </source>
</reference>
<feature type="chain" id="PRO_1000148739" description="Acetyl-coenzyme A carboxylase carboxyl transferase subunit alpha">
    <location>
        <begin position="1"/>
        <end position="319"/>
    </location>
</feature>
<feature type="domain" description="CoA carboxyltransferase C-terminal" evidence="2">
    <location>
        <begin position="35"/>
        <end position="292"/>
    </location>
</feature>
<evidence type="ECO:0000255" key="1">
    <source>
        <dbReference type="HAMAP-Rule" id="MF_00823"/>
    </source>
</evidence>
<evidence type="ECO:0000255" key="2">
    <source>
        <dbReference type="PROSITE-ProRule" id="PRU01137"/>
    </source>
</evidence>
<sequence>MAQHFDFEKPILELEQKIAELQEFSKEKDINLSPEISKLMRRLVRLRKEIYGNLEPWQKVQIARHMERPNFYDYAPLLFEDFMEFKGDRLFADDKAIVGGIAIFQGIPVTVVSHIKGRGTKENIQRNFGMPHPEGYRKALRLMDQAEKFHRPILTFIDTPGAACDLEAEERGQGEAIARCLQAMAGYSVPIICTVIGEGGSGGALALGVGNKVLLLENSFYSVIAPESCASILWKDPGKAKEAASALKFTAQDLLELGIADGIIKEPLGGAHRSVERTAEEMKKTIAEALAELRELPPDELRTMRYEKLMNYGEFEEKA</sequence>
<dbReference type="EC" id="2.1.3.15" evidence="1"/>
<dbReference type="EMBL" id="CP001336">
    <property type="protein sequence ID" value="ACL20442.1"/>
    <property type="molecule type" value="Genomic_DNA"/>
</dbReference>
<dbReference type="RefSeq" id="WP_005814659.1">
    <property type="nucleotide sequence ID" value="NC_011830.1"/>
</dbReference>
<dbReference type="SMR" id="B8FTK8"/>
<dbReference type="KEGG" id="dhd:Dhaf_2414"/>
<dbReference type="HOGENOM" id="CLU_015486_0_2_9"/>
<dbReference type="UniPathway" id="UPA00655">
    <property type="reaction ID" value="UER00711"/>
</dbReference>
<dbReference type="Proteomes" id="UP000007726">
    <property type="component" value="Chromosome"/>
</dbReference>
<dbReference type="GO" id="GO:0009317">
    <property type="term" value="C:acetyl-CoA carboxylase complex"/>
    <property type="evidence" value="ECO:0007669"/>
    <property type="project" value="InterPro"/>
</dbReference>
<dbReference type="GO" id="GO:0003989">
    <property type="term" value="F:acetyl-CoA carboxylase activity"/>
    <property type="evidence" value="ECO:0007669"/>
    <property type="project" value="InterPro"/>
</dbReference>
<dbReference type="GO" id="GO:0005524">
    <property type="term" value="F:ATP binding"/>
    <property type="evidence" value="ECO:0007669"/>
    <property type="project" value="UniProtKB-KW"/>
</dbReference>
<dbReference type="GO" id="GO:0016743">
    <property type="term" value="F:carboxyl- or carbamoyltransferase activity"/>
    <property type="evidence" value="ECO:0007669"/>
    <property type="project" value="UniProtKB-UniRule"/>
</dbReference>
<dbReference type="GO" id="GO:0006633">
    <property type="term" value="P:fatty acid biosynthetic process"/>
    <property type="evidence" value="ECO:0007669"/>
    <property type="project" value="UniProtKB-KW"/>
</dbReference>
<dbReference type="GO" id="GO:2001295">
    <property type="term" value="P:malonyl-CoA biosynthetic process"/>
    <property type="evidence" value="ECO:0007669"/>
    <property type="project" value="UniProtKB-UniRule"/>
</dbReference>
<dbReference type="Gene3D" id="3.90.226.10">
    <property type="entry name" value="2-enoyl-CoA Hydratase, Chain A, domain 1"/>
    <property type="match status" value="1"/>
</dbReference>
<dbReference type="HAMAP" id="MF_00823">
    <property type="entry name" value="AcetylCoA_CT_alpha"/>
    <property type="match status" value="1"/>
</dbReference>
<dbReference type="InterPro" id="IPR001095">
    <property type="entry name" value="Acetyl_CoA_COase_a_su"/>
</dbReference>
<dbReference type="InterPro" id="IPR029045">
    <property type="entry name" value="ClpP/crotonase-like_dom_sf"/>
</dbReference>
<dbReference type="InterPro" id="IPR011763">
    <property type="entry name" value="COA_CT_C"/>
</dbReference>
<dbReference type="NCBIfam" id="TIGR00513">
    <property type="entry name" value="accA"/>
    <property type="match status" value="1"/>
</dbReference>
<dbReference type="NCBIfam" id="NF041504">
    <property type="entry name" value="AccA_sub"/>
    <property type="match status" value="1"/>
</dbReference>
<dbReference type="NCBIfam" id="NF004344">
    <property type="entry name" value="PRK05724.1"/>
    <property type="match status" value="1"/>
</dbReference>
<dbReference type="PANTHER" id="PTHR42853">
    <property type="entry name" value="ACETYL-COENZYME A CARBOXYLASE CARBOXYL TRANSFERASE SUBUNIT ALPHA"/>
    <property type="match status" value="1"/>
</dbReference>
<dbReference type="PANTHER" id="PTHR42853:SF3">
    <property type="entry name" value="ACETYL-COENZYME A CARBOXYLASE CARBOXYL TRANSFERASE SUBUNIT ALPHA, CHLOROPLASTIC"/>
    <property type="match status" value="1"/>
</dbReference>
<dbReference type="Pfam" id="PF03255">
    <property type="entry name" value="ACCA"/>
    <property type="match status" value="1"/>
</dbReference>
<dbReference type="PRINTS" id="PR01069">
    <property type="entry name" value="ACCCTRFRASEA"/>
</dbReference>
<dbReference type="SUPFAM" id="SSF52096">
    <property type="entry name" value="ClpP/crotonase"/>
    <property type="match status" value="1"/>
</dbReference>
<dbReference type="PROSITE" id="PS50989">
    <property type="entry name" value="COA_CT_CTER"/>
    <property type="match status" value="1"/>
</dbReference>